<name>LYSK_SACS2</name>
<sequence length="346" mass="38810">MLQEKELVKQKAKELLLDLLSIYTPSKSEANATKFFEKISKDLNLKLEILPDSNSFILGEGDILLASHVDTVYGYIEPKIENELIYGRGAVDAKGPLISMIIATWLLNEKGIKVRVSGLADEESTSIGAKELIAKNYNFKYIIVGEPSNATDIVVEYRGSIQLDIMCEGTPEHSSSAKNNLIVDISKKIIEVYKQPENYDKPSIVPTIIRAGESYNVTPAKLYLHLDIRYAINNKREDLIKEITDKFPECNLKIVDETPPVKVSINNPVVKSLARALLKQNIKPRLVKKAGTSDMNILQRITTNIATYGPGNSMLEHTTQEKISLDEIYIGVKTYMLAIEELWQKI</sequence>
<dbReference type="EC" id="3.5.1.130" evidence="1"/>
<dbReference type="EC" id="3.5.1.132" evidence="1"/>
<dbReference type="EMBL" id="AE006641">
    <property type="protein sequence ID" value="AAK40507.1"/>
    <property type="molecule type" value="Genomic_DNA"/>
</dbReference>
<dbReference type="EMBL" id="BK000545">
    <property type="protein sequence ID" value="DAA00055.1"/>
    <property type="molecule type" value="Genomic_DNA"/>
</dbReference>
<dbReference type="PIR" id="D90156">
    <property type="entry name" value="D90156"/>
</dbReference>
<dbReference type="RefSeq" id="WP_009990386.1">
    <property type="nucleotide sequence ID" value="NC_002754.1"/>
</dbReference>
<dbReference type="SMR" id="Q980W5"/>
<dbReference type="FunCoup" id="Q980W5">
    <property type="interactions" value="90"/>
</dbReference>
<dbReference type="STRING" id="273057.SSO0162"/>
<dbReference type="MEROPS" id="M20.975"/>
<dbReference type="PaxDb" id="273057-SSO0162"/>
<dbReference type="EnsemblBacteria" id="AAK40507">
    <property type="protein sequence ID" value="AAK40507"/>
    <property type="gene ID" value="SSO0162"/>
</dbReference>
<dbReference type="KEGG" id="sso:SSO0162"/>
<dbReference type="PATRIC" id="fig|273057.12.peg.158"/>
<dbReference type="eggNOG" id="arCOG01107">
    <property type="taxonomic scope" value="Archaea"/>
</dbReference>
<dbReference type="HOGENOM" id="CLU_021802_2_0_2"/>
<dbReference type="InParanoid" id="Q980W5"/>
<dbReference type="PhylomeDB" id="Q980W5"/>
<dbReference type="UniPathway" id="UPA00033">
    <property type="reaction ID" value="UER00039"/>
</dbReference>
<dbReference type="UniPathway" id="UPA00068"/>
<dbReference type="Proteomes" id="UP000001974">
    <property type="component" value="Chromosome"/>
</dbReference>
<dbReference type="GO" id="GO:0005737">
    <property type="term" value="C:cytoplasm"/>
    <property type="evidence" value="ECO:0007669"/>
    <property type="project" value="UniProtKB-SubCell"/>
</dbReference>
<dbReference type="GO" id="GO:0050897">
    <property type="term" value="F:cobalt ion binding"/>
    <property type="evidence" value="ECO:0007669"/>
    <property type="project" value="UniProtKB-UniRule"/>
</dbReference>
<dbReference type="GO" id="GO:0016811">
    <property type="term" value="F:hydrolase activity, acting on carbon-nitrogen (but not peptide) bonds, in linear amides"/>
    <property type="evidence" value="ECO:0007669"/>
    <property type="project" value="UniProtKB-UniRule"/>
</dbReference>
<dbReference type="GO" id="GO:0008270">
    <property type="term" value="F:zinc ion binding"/>
    <property type="evidence" value="ECO:0007669"/>
    <property type="project" value="UniProtKB-UniRule"/>
</dbReference>
<dbReference type="GO" id="GO:0042450">
    <property type="term" value="P:arginine biosynthetic process via ornithine"/>
    <property type="evidence" value="ECO:0007669"/>
    <property type="project" value="UniProtKB-UniRule"/>
</dbReference>
<dbReference type="GO" id="GO:0006526">
    <property type="term" value="P:L-arginine biosynthetic process"/>
    <property type="evidence" value="ECO:0007669"/>
    <property type="project" value="UniProtKB-UniPathway"/>
</dbReference>
<dbReference type="GO" id="GO:0019878">
    <property type="term" value="P:lysine biosynthetic process via aminoadipic acid"/>
    <property type="evidence" value="ECO:0007669"/>
    <property type="project" value="UniProtKB-UniRule"/>
</dbReference>
<dbReference type="CDD" id="cd05653">
    <property type="entry name" value="M20_ArgE_LysK"/>
    <property type="match status" value="1"/>
</dbReference>
<dbReference type="Gene3D" id="3.30.70.360">
    <property type="match status" value="1"/>
</dbReference>
<dbReference type="Gene3D" id="3.40.630.10">
    <property type="entry name" value="Zn peptidases"/>
    <property type="match status" value="1"/>
</dbReference>
<dbReference type="HAMAP" id="MF_01120">
    <property type="entry name" value="LysK"/>
    <property type="match status" value="1"/>
</dbReference>
<dbReference type="InterPro" id="IPR001261">
    <property type="entry name" value="ArgE/DapE_CS"/>
</dbReference>
<dbReference type="InterPro" id="IPR036264">
    <property type="entry name" value="Bact_exopeptidase_dim_dom"/>
</dbReference>
<dbReference type="InterPro" id="IPR010175">
    <property type="entry name" value="LysK"/>
</dbReference>
<dbReference type="InterPro" id="IPR002933">
    <property type="entry name" value="Peptidase_M20"/>
</dbReference>
<dbReference type="InterPro" id="IPR011650">
    <property type="entry name" value="Peptidase_M20_dimer"/>
</dbReference>
<dbReference type="InterPro" id="IPR050072">
    <property type="entry name" value="Peptidase_M20A"/>
</dbReference>
<dbReference type="NCBIfam" id="TIGR01902">
    <property type="entry name" value="dapE-lys-deAc"/>
    <property type="match status" value="1"/>
</dbReference>
<dbReference type="NCBIfam" id="NF001747">
    <property type="entry name" value="PRK00466.1"/>
    <property type="match status" value="1"/>
</dbReference>
<dbReference type="PANTHER" id="PTHR43808:SF28">
    <property type="entry name" value="[LYSW]-LYSINE_[LYSW]-ORNITHINE HYDROLASE"/>
    <property type="match status" value="1"/>
</dbReference>
<dbReference type="PANTHER" id="PTHR43808">
    <property type="entry name" value="ACETYLORNITHINE DEACETYLASE"/>
    <property type="match status" value="1"/>
</dbReference>
<dbReference type="Pfam" id="PF07687">
    <property type="entry name" value="M20_dimer"/>
    <property type="match status" value="1"/>
</dbReference>
<dbReference type="Pfam" id="PF01546">
    <property type="entry name" value="Peptidase_M20"/>
    <property type="match status" value="1"/>
</dbReference>
<dbReference type="SUPFAM" id="SSF55031">
    <property type="entry name" value="Bacterial exopeptidase dimerisation domain"/>
    <property type="match status" value="1"/>
</dbReference>
<dbReference type="SUPFAM" id="SSF53187">
    <property type="entry name" value="Zn-dependent exopeptidases"/>
    <property type="match status" value="1"/>
</dbReference>
<dbReference type="PROSITE" id="PS00758">
    <property type="entry name" value="ARGE_DAPE_CPG2_1"/>
    <property type="match status" value="1"/>
</dbReference>
<keyword id="KW-0028">Amino-acid biosynthesis</keyword>
<keyword id="KW-0055">Arginine biosynthesis</keyword>
<keyword id="KW-0170">Cobalt</keyword>
<keyword id="KW-0963">Cytoplasm</keyword>
<keyword id="KW-0378">Hydrolase</keyword>
<keyword id="KW-0457">Lysine biosynthesis</keyword>
<keyword id="KW-0479">Metal-binding</keyword>
<keyword id="KW-1185">Reference proteome</keyword>
<keyword id="KW-0862">Zinc</keyword>
<proteinExistence type="inferred from homology"/>
<comment type="function">
    <text evidence="1">Catalyzes the release of L-lysine from [LysW]-gamma-L-lysine and the release of L-ornithine from [LysW]-L-ornithine.</text>
</comment>
<comment type="catalytic activity">
    <reaction evidence="1">
        <text>[amino-group carrier protein]-C-terminal-gamma-(L-lysyl)-L-glutamate + H2O = [amino-group carrier protein]-C-terminal-L-glutamate + L-lysine</text>
        <dbReference type="Rhea" id="RHEA:48684"/>
        <dbReference type="Rhea" id="RHEA-COMP:9693"/>
        <dbReference type="Rhea" id="RHEA-COMP:9715"/>
        <dbReference type="ChEBI" id="CHEBI:15377"/>
        <dbReference type="ChEBI" id="CHEBI:32551"/>
        <dbReference type="ChEBI" id="CHEBI:78525"/>
        <dbReference type="ChEBI" id="CHEBI:78526"/>
        <dbReference type="EC" id="3.5.1.130"/>
    </reaction>
</comment>
<comment type="catalytic activity">
    <reaction evidence="1">
        <text>[amino-group carrier protein]-C-terminal-gamma-(L-ornithyl)-L-glutamate + H2O = [amino-group carrier protein]-C-terminal-L-glutamate + L-ornithine</text>
        <dbReference type="Rhea" id="RHEA:52676"/>
        <dbReference type="Rhea" id="RHEA-COMP:9693"/>
        <dbReference type="Rhea" id="RHEA-COMP:13328"/>
        <dbReference type="ChEBI" id="CHEBI:15377"/>
        <dbReference type="ChEBI" id="CHEBI:46911"/>
        <dbReference type="ChEBI" id="CHEBI:78525"/>
        <dbReference type="ChEBI" id="CHEBI:136763"/>
        <dbReference type="EC" id="3.5.1.132"/>
    </reaction>
</comment>
<comment type="cofactor">
    <cofactor evidence="1">
        <name>Zn(2+)</name>
        <dbReference type="ChEBI" id="CHEBI:29105"/>
    </cofactor>
    <cofactor evidence="1">
        <name>Co(2+)</name>
        <dbReference type="ChEBI" id="CHEBI:48828"/>
    </cofactor>
    <text evidence="1">Binds 2 Zn(2+) or Co(2+) ions per subunit.</text>
</comment>
<comment type="pathway">
    <text evidence="1">Amino-acid biosynthesis; L-lysine biosynthesis via AAA pathway; L-lysine from L-alpha-aminoadipate (Thermus route): step 5/5.</text>
</comment>
<comment type="pathway">
    <text evidence="1">Amino-acid biosynthesis; L-arginine biosynthesis.</text>
</comment>
<comment type="subcellular location">
    <subcellularLocation>
        <location evidence="1">Cytoplasm</location>
    </subcellularLocation>
</comment>
<comment type="similarity">
    <text evidence="1">Belongs to the peptidase M20A family. LysK subfamily.</text>
</comment>
<evidence type="ECO:0000255" key="1">
    <source>
        <dbReference type="HAMAP-Rule" id="MF_01120"/>
    </source>
</evidence>
<accession>Q980W5</accession>
<gene>
    <name evidence="1" type="primary">lysK</name>
    <name type="ordered locus">SSO0162</name>
</gene>
<organism>
    <name type="scientific">Saccharolobus solfataricus (strain ATCC 35092 / DSM 1617 / JCM 11322 / P2)</name>
    <name type="common">Sulfolobus solfataricus</name>
    <dbReference type="NCBI Taxonomy" id="273057"/>
    <lineage>
        <taxon>Archaea</taxon>
        <taxon>Thermoproteota</taxon>
        <taxon>Thermoprotei</taxon>
        <taxon>Sulfolobales</taxon>
        <taxon>Sulfolobaceae</taxon>
        <taxon>Saccharolobus</taxon>
    </lineage>
</organism>
<reference key="1">
    <citation type="journal article" date="2001" name="Proc. Natl. Acad. Sci. U.S.A.">
        <title>The complete genome of the crenarchaeon Sulfolobus solfataricus P2.</title>
        <authorList>
            <person name="She Q."/>
            <person name="Singh R.K."/>
            <person name="Confalonieri F."/>
            <person name="Zivanovic Y."/>
            <person name="Allard G."/>
            <person name="Awayez M.J."/>
            <person name="Chan-Weiher C.C.-Y."/>
            <person name="Clausen I.G."/>
            <person name="Curtis B.A."/>
            <person name="De Moors A."/>
            <person name="Erauso G."/>
            <person name="Fletcher C."/>
            <person name="Gordon P.M.K."/>
            <person name="Heikamp-de Jong I."/>
            <person name="Jeffries A.C."/>
            <person name="Kozera C.J."/>
            <person name="Medina N."/>
            <person name="Peng X."/>
            <person name="Thi-Ngoc H.P."/>
            <person name="Redder P."/>
            <person name="Schenk M.E."/>
            <person name="Theriault C."/>
            <person name="Tolstrup N."/>
            <person name="Charlebois R.L."/>
            <person name="Doolittle W.F."/>
            <person name="Duguet M."/>
            <person name="Gaasterland T."/>
            <person name="Garrett R.A."/>
            <person name="Ragan M.A."/>
            <person name="Sensen C.W."/>
            <person name="Van der Oost J."/>
        </authorList>
    </citation>
    <scope>NUCLEOTIDE SEQUENCE [LARGE SCALE GENOMIC DNA]</scope>
    <source>
        <strain>ATCC 35092 / DSM 1617 / JCM 11322 / P2</strain>
    </source>
</reference>
<reference key="2">
    <citation type="journal article" date="2002" name="J. Biol. Chem.">
        <title>The Sulfolobus solfataricus Lrp-like protein LysM regulates lysine biosynthesis in response to lysine availability.</title>
        <authorList>
            <person name="Brinkman A.B."/>
            <person name="Bell S.D."/>
            <person name="Lebbink R.J."/>
            <person name="de Vos W.M."/>
            <person name="van der Oost J."/>
        </authorList>
    </citation>
    <scope>NUCLEOTIDE SEQUENCE [GENOMIC DNA]</scope>
    <source>
        <strain>ATCC 35092 / DSM 1617 / JCM 11322 / P2</strain>
    </source>
</reference>
<feature type="chain" id="PRO_0000185350" description="[LysW]-lysine/[LysW]-ornithine hydrolase">
    <location>
        <begin position="1"/>
        <end position="346"/>
    </location>
</feature>
<feature type="active site" evidence="1">
    <location>
        <position position="70"/>
    </location>
</feature>
<feature type="active site" description="Proton acceptor" evidence="1">
    <location>
        <position position="122"/>
    </location>
</feature>
<feature type="binding site" evidence="1">
    <location>
        <position position="68"/>
    </location>
    <ligand>
        <name>Zn(2+)</name>
        <dbReference type="ChEBI" id="CHEBI:29105"/>
        <label>1</label>
    </ligand>
</feature>
<feature type="binding site" evidence="1">
    <location>
        <position position="92"/>
    </location>
    <ligand>
        <name>Zn(2+)</name>
        <dbReference type="ChEBI" id="CHEBI:29105"/>
        <label>1</label>
    </ligand>
</feature>
<feature type="binding site" evidence="1">
    <location>
        <position position="92"/>
    </location>
    <ligand>
        <name>Zn(2+)</name>
        <dbReference type="ChEBI" id="CHEBI:29105"/>
        <label>2</label>
    </ligand>
</feature>
<feature type="binding site" evidence="1">
    <location>
        <position position="123"/>
    </location>
    <ligand>
        <name>Zn(2+)</name>
        <dbReference type="ChEBI" id="CHEBI:29105"/>
        <label>2</label>
    </ligand>
</feature>
<feature type="binding site" evidence="1">
    <location>
        <position position="146"/>
    </location>
    <ligand>
        <name>Zn(2+)</name>
        <dbReference type="ChEBI" id="CHEBI:29105"/>
        <label>1</label>
    </ligand>
</feature>
<feature type="binding site" evidence="1">
    <location>
        <position position="317"/>
    </location>
    <ligand>
        <name>Zn(2+)</name>
        <dbReference type="ChEBI" id="CHEBI:29105"/>
        <label>2</label>
    </ligand>
</feature>
<protein>
    <recommendedName>
        <fullName evidence="1">[LysW]-lysine/[LysW]-ornithine hydrolase</fullName>
        <ecNumber evidence="1">3.5.1.130</ecNumber>
        <ecNumber evidence="1">3.5.1.132</ecNumber>
    </recommendedName>
</protein>